<keyword id="KW-1003">Cell membrane</keyword>
<keyword id="KW-0175">Coiled coil</keyword>
<keyword id="KW-0256">Endoplasmic reticulum</keyword>
<keyword id="KW-0333">Golgi apparatus</keyword>
<keyword id="KW-0472">Membrane</keyword>
<keyword id="KW-0653">Protein transport</keyword>
<keyword id="KW-1185">Reference proteome</keyword>
<keyword id="KW-0732">Signal</keyword>
<keyword id="KW-0812">Transmembrane</keyword>
<keyword id="KW-1133">Transmembrane helix</keyword>
<keyword id="KW-0813">Transport</keyword>
<gene>
    <name type="primary">TMED1</name>
</gene>
<feature type="signal peptide" evidence="1">
    <location>
        <begin position="1"/>
        <end position="23"/>
    </location>
</feature>
<feature type="chain" id="PRO_0000248021" description="Transmembrane emp24 domain-containing protein 1">
    <location>
        <begin position="24"/>
        <end position="227"/>
    </location>
</feature>
<feature type="topological domain" description="Extracellular" evidence="3">
    <location>
        <begin position="24"/>
        <end position="194"/>
    </location>
</feature>
<feature type="transmembrane region" description="Helical" evidence="3">
    <location>
        <begin position="195"/>
        <end position="215"/>
    </location>
</feature>
<feature type="topological domain" description="Cytoplasmic" evidence="3">
    <location>
        <begin position="216"/>
        <end position="227"/>
    </location>
</feature>
<feature type="domain" description="GOLD" evidence="4">
    <location>
        <begin position="43"/>
        <end position="125"/>
    </location>
</feature>
<feature type="coiled-coil region" evidence="3">
    <location>
        <begin position="145"/>
        <end position="170"/>
    </location>
</feature>
<feature type="short sequence motif" description="COPI vesicle coat-binding" evidence="3">
    <location>
        <begin position="218"/>
        <end position="227"/>
    </location>
</feature>
<feature type="short sequence motif" description="COPII vesicle coat-binding" evidence="3">
    <location>
        <begin position="218"/>
        <end position="219"/>
    </location>
</feature>
<dbReference type="EMBL" id="CR860172">
    <property type="protein sequence ID" value="CAH92314.1"/>
    <property type="molecule type" value="mRNA"/>
</dbReference>
<dbReference type="RefSeq" id="NP_001126357.1">
    <property type="nucleotide sequence ID" value="NM_001132885.3"/>
</dbReference>
<dbReference type="SMR" id="Q5R7E6"/>
<dbReference type="FunCoup" id="Q5R7E6">
    <property type="interactions" value="1437"/>
</dbReference>
<dbReference type="STRING" id="9601.ENSPPYP00000010726"/>
<dbReference type="Ensembl" id="ENSPPYT00000011146.2">
    <property type="protein sequence ID" value="ENSPPYP00000010726.1"/>
    <property type="gene ID" value="ENSPPYG00000009563.2"/>
</dbReference>
<dbReference type="GeneID" id="100443715"/>
<dbReference type="KEGG" id="pon:100443715"/>
<dbReference type="CTD" id="11018"/>
<dbReference type="eggNOG" id="KOG3287">
    <property type="taxonomic scope" value="Eukaryota"/>
</dbReference>
<dbReference type="GeneTree" id="ENSGT00940000158445"/>
<dbReference type="HOGENOM" id="CLU_066963_0_0_1"/>
<dbReference type="InParanoid" id="Q5R7E6"/>
<dbReference type="OMA" id="AGDYMIC"/>
<dbReference type="OrthoDB" id="5976732at2759"/>
<dbReference type="TreeFam" id="TF313000"/>
<dbReference type="Proteomes" id="UP000001595">
    <property type="component" value="Chromosome 19"/>
</dbReference>
<dbReference type="GO" id="GO:0005789">
    <property type="term" value="C:endoplasmic reticulum membrane"/>
    <property type="evidence" value="ECO:0007669"/>
    <property type="project" value="UniProtKB-SubCell"/>
</dbReference>
<dbReference type="GO" id="GO:0033116">
    <property type="term" value="C:endoplasmic reticulum-Golgi intermediate compartment membrane"/>
    <property type="evidence" value="ECO:0007669"/>
    <property type="project" value="UniProtKB-SubCell"/>
</dbReference>
<dbReference type="GO" id="GO:0005794">
    <property type="term" value="C:Golgi apparatus"/>
    <property type="evidence" value="ECO:0007669"/>
    <property type="project" value="UniProtKB-SubCell"/>
</dbReference>
<dbReference type="GO" id="GO:0005886">
    <property type="term" value="C:plasma membrane"/>
    <property type="evidence" value="ECO:0007669"/>
    <property type="project" value="UniProtKB-SubCell"/>
</dbReference>
<dbReference type="GO" id="GO:0015031">
    <property type="term" value="P:protein transport"/>
    <property type="evidence" value="ECO:0007669"/>
    <property type="project" value="UniProtKB-KW"/>
</dbReference>
<dbReference type="InterPro" id="IPR015720">
    <property type="entry name" value="Emp24-like"/>
</dbReference>
<dbReference type="InterPro" id="IPR009038">
    <property type="entry name" value="GOLD_dom"/>
</dbReference>
<dbReference type="InterPro" id="IPR036598">
    <property type="entry name" value="GOLD_dom_sf"/>
</dbReference>
<dbReference type="PANTHER" id="PTHR22811">
    <property type="entry name" value="TRANSMEMBRANE EMP24 DOMAIN-CONTAINING PROTEIN"/>
    <property type="match status" value="1"/>
</dbReference>
<dbReference type="Pfam" id="PF01105">
    <property type="entry name" value="EMP24_GP25L"/>
    <property type="match status" value="1"/>
</dbReference>
<dbReference type="SMART" id="SM01190">
    <property type="entry name" value="EMP24_GP25L"/>
    <property type="match status" value="1"/>
</dbReference>
<dbReference type="SUPFAM" id="SSF101576">
    <property type="entry name" value="Supernatant protein factor (SPF), C-terminal domain"/>
    <property type="match status" value="1"/>
</dbReference>
<dbReference type="PROSITE" id="PS50866">
    <property type="entry name" value="GOLD"/>
    <property type="match status" value="1"/>
</dbReference>
<name>TMED1_PONAB</name>
<protein>
    <recommendedName>
        <fullName>Transmembrane emp24 domain-containing protein 1</fullName>
    </recommendedName>
    <alternativeName>
        <fullName>p24 family protein gamma-1</fullName>
        <shortName>p24gamma1</shortName>
    </alternativeName>
</protein>
<accession>Q5R7E6</accession>
<sequence length="227" mass="25134">MMAAGAALALALWLLMPPVGVGGAGPPPIQDGEFTFLLPAGRKQCFYQSAPANASLETEYQVIGGAGLDVDFTLESPQGVLLVSESRKADGVHTVEPTEAGDYKLCFDNSFSTISEKLVFFELIFDSLQDDEEVEGWAEAVEPEEMLDVKMEDIKESIETMRTRLERSIQMLTLLRAFEARDRNLQEGNLERVNFWSAVNVAVLLLVAVLQVCTLKRFFQDKRPVPT</sequence>
<proteinExistence type="evidence at transcript level"/>
<organism>
    <name type="scientific">Pongo abelii</name>
    <name type="common">Sumatran orangutan</name>
    <name type="synonym">Pongo pygmaeus abelii</name>
    <dbReference type="NCBI Taxonomy" id="9601"/>
    <lineage>
        <taxon>Eukaryota</taxon>
        <taxon>Metazoa</taxon>
        <taxon>Chordata</taxon>
        <taxon>Craniata</taxon>
        <taxon>Vertebrata</taxon>
        <taxon>Euteleostomi</taxon>
        <taxon>Mammalia</taxon>
        <taxon>Eutheria</taxon>
        <taxon>Euarchontoglires</taxon>
        <taxon>Primates</taxon>
        <taxon>Haplorrhini</taxon>
        <taxon>Catarrhini</taxon>
        <taxon>Hominidae</taxon>
        <taxon>Pongo</taxon>
    </lineage>
</organism>
<reference key="1">
    <citation type="submission" date="2004-11" db="EMBL/GenBank/DDBJ databases">
        <authorList>
            <consortium name="The German cDNA consortium"/>
        </authorList>
    </citation>
    <scope>NUCLEOTIDE SEQUENCE [LARGE SCALE MRNA]</scope>
    <source>
        <tissue>Kidney</tissue>
    </source>
</reference>
<comment type="function">
    <text evidence="2">Potential role in vesicular protein trafficking, mainly in the early secretory pathway. May act as a cargo receptor at the lumenal side for incorporation of secretory cargo molecules into transport vesicles and may be involved in vesicle coat formation at the cytoplasmic side. Plays a positive role in IL-33-mediated IL-8 and IL-6 production by interacting with interleukin-33 receptor IL1RL1. Plays also a role in the modulation of innate immune signaling through the cGAS-STING pathway by interacting with RNF26.</text>
</comment>
<comment type="subunit">
    <text evidence="2">Homodimer in endoplasmic reticulum, endoplasmic reticulum-Golgi intermediate compartment and cis-Golgi network. Interacts with IL1RL1. Interacts with RNF26; this interaction is important to modulate innate immune signaling through the cGAS-STING pathway.</text>
</comment>
<comment type="subcellular location">
    <subcellularLocation>
        <location evidence="2">Cell membrane</location>
        <topology evidence="3">Single-pass type I membrane protein</topology>
    </subcellularLocation>
    <subcellularLocation>
        <location evidence="2">Endoplasmic reticulum membrane</location>
        <topology evidence="3">Single-pass type I membrane protein</topology>
    </subcellularLocation>
    <subcellularLocation>
        <location evidence="2">Golgi apparatus</location>
        <location evidence="2">cis-Golgi network membrane</location>
        <topology evidence="3">Single-pass type I membrane protein</topology>
    </subcellularLocation>
    <subcellularLocation>
        <location evidence="2">Endoplasmic reticulum-Golgi intermediate compartment membrane</location>
        <topology evidence="3">Single-pass type I membrane protein</topology>
    </subcellularLocation>
</comment>
<comment type="similarity">
    <text evidence="5">Belongs to the EMP24/GP25L family.</text>
</comment>
<evidence type="ECO:0000250" key="1"/>
<evidence type="ECO:0000250" key="2">
    <source>
        <dbReference type="UniProtKB" id="Q13445"/>
    </source>
</evidence>
<evidence type="ECO:0000255" key="3"/>
<evidence type="ECO:0000255" key="4">
    <source>
        <dbReference type="PROSITE-ProRule" id="PRU00096"/>
    </source>
</evidence>
<evidence type="ECO:0000305" key="5"/>